<reference key="1">
    <citation type="journal article" date="2005" name="Science">
        <title>The transcriptional landscape of the mammalian genome.</title>
        <authorList>
            <person name="Carninci P."/>
            <person name="Kasukawa T."/>
            <person name="Katayama S."/>
            <person name="Gough J."/>
            <person name="Frith M.C."/>
            <person name="Maeda N."/>
            <person name="Oyama R."/>
            <person name="Ravasi T."/>
            <person name="Lenhard B."/>
            <person name="Wells C."/>
            <person name="Kodzius R."/>
            <person name="Shimokawa K."/>
            <person name="Bajic V.B."/>
            <person name="Brenner S.E."/>
            <person name="Batalov S."/>
            <person name="Forrest A.R."/>
            <person name="Zavolan M."/>
            <person name="Davis M.J."/>
            <person name="Wilming L.G."/>
            <person name="Aidinis V."/>
            <person name="Allen J.E."/>
            <person name="Ambesi-Impiombato A."/>
            <person name="Apweiler R."/>
            <person name="Aturaliya R.N."/>
            <person name="Bailey T.L."/>
            <person name="Bansal M."/>
            <person name="Baxter L."/>
            <person name="Beisel K.W."/>
            <person name="Bersano T."/>
            <person name="Bono H."/>
            <person name="Chalk A.M."/>
            <person name="Chiu K.P."/>
            <person name="Choudhary V."/>
            <person name="Christoffels A."/>
            <person name="Clutterbuck D.R."/>
            <person name="Crowe M.L."/>
            <person name="Dalla E."/>
            <person name="Dalrymple B.P."/>
            <person name="de Bono B."/>
            <person name="Della Gatta G."/>
            <person name="di Bernardo D."/>
            <person name="Down T."/>
            <person name="Engstrom P."/>
            <person name="Fagiolini M."/>
            <person name="Faulkner G."/>
            <person name="Fletcher C.F."/>
            <person name="Fukushima T."/>
            <person name="Furuno M."/>
            <person name="Futaki S."/>
            <person name="Gariboldi M."/>
            <person name="Georgii-Hemming P."/>
            <person name="Gingeras T.R."/>
            <person name="Gojobori T."/>
            <person name="Green R.E."/>
            <person name="Gustincich S."/>
            <person name="Harbers M."/>
            <person name="Hayashi Y."/>
            <person name="Hensch T.K."/>
            <person name="Hirokawa N."/>
            <person name="Hill D."/>
            <person name="Huminiecki L."/>
            <person name="Iacono M."/>
            <person name="Ikeo K."/>
            <person name="Iwama A."/>
            <person name="Ishikawa T."/>
            <person name="Jakt M."/>
            <person name="Kanapin A."/>
            <person name="Katoh M."/>
            <person name="Kawasawa Y."/>
            <person name="Kelso J."/>
            <person name="Kitamura H."/>
            <person name="Kitano H."/>
            <person name="Kollias G."/>
            <person name="Krishnan S.P."/>
            <person name="Kruger A."/>
            <person name="Kummerfeld S.K."/>
            <person name="Kurochkin I.V."/>
            <person name="Lareau L.F."/>
            <person name="Lazarevic D."/>
            <person name="Lipovich L."/>
            <person name="Liu J."/>
            <person name="Liuni S."/>
            <person name="McWilliam S."/>
            <person name="Madan Babu M."/>
            <person name="Madera M."/>
            <person name="Marchionni L."/>
            <person name="Matsuda H."/>
            <person name="Matsuzawa S."/>
            <person name="Miki H."/>
            <person name="Mignone F."/>
            <person name="Miyake S."/>
            <person name="Morris K."/>
            <person name="Mottagui-Tabar S."/>
            <person name="Mulder N."/>
            <person name="Nakano N."/>
            <person name="Nakauchi H."/>
            <person name="Ng P."/>
            <person name="Nilsson R."/>
            <person name="Nishiguchi S."/>
            <person name="Nishikawa S."/>
            <person name="Nori F."/>
            <person name="Ohara O."/>
            <person name="Okazaki Y."/>
            <person name="Orlando V."/>
            <person name="Pang K.C."/>
            <person name="Pavan W.J."/>
            <person name="Pavesi G."/>
            <person name="Pesole G."/>
            <person name="Petrovsky N."/>
            <person name="Piazza S."/>
            <person name="Reed J."/>
            <person name="Reid J.F."/>
            <person name="Ring B.Z."/>
            <person name="Ringwald M."/>
            <person name="Rost B."/>
            <person name="Ruan Y."/>
            <person name="Salzberg S.L."/>
            <person name="Sandelin A."/>
            <person name="Schneider C."/>
            <person name="Schoenbach C."/>
            <person name="Sekiguchi K."/>
            <person name="Semple C.A."/>
            <person name="Seno S."/>
            <person name="Sessa L."/>
            <person name="Sheng Y."/>
            <person name="Shibata Y."/>
            <person name="Shimada H."/>
            <person name="Shimada K."/>
            <person name="Silva D."/>
            <person name="Sinclair B."/>
            <person name="Sperling S."/>
            <person name="Stupka E."/>
            <person name="Sugiura K."/>
            <person name="Sultana R."/>
            <person name="Takenaka Y."/>
            <person name="Taki K."/>
            <person name="Tammoja K."/>
            <person name="Tan S.L."/>
            <person name="Tang S."/>
            <person name="Taylor M.S."/>
            <person name="Tegner J."/>
            <person name="Teichmann S.A."/>
            <person name="Ueda H.R."/>
            <person name="van Nimwegen E."/>
            <person name="Verardo R."/>
            <person name="Wei C.L."/>
            <person name="Yagi K."/>
            <person name="Yamanishi H."/>
            <person name="Zabarovsky E."/>
            <person name="Zhu S."/>
            <person name="Zimmer A."/>
            <person name="Hide W."/>
            <person name="Bult C."/>
            <person name="Grimmond S.M."/>
            <person name="Teasdale R.D."/>
            <person name="Liu E.T."/>
            <person name="Brusic V."/>
            <person name="Quackenbush J."/>
            <person name="Wahlestedt C."/>
            <person name="Mattick J.S."/>
            <person name="Hume D.A."/>
            <person name="Kai C."/>
            <person name="Sasaki D."/>
            <person name="Tomaru Y."/>
            <person name="Fukuda S."/>
            <person name="Kanamori-Katayama M."/>
            <person name="Suzuki M."/>
            <person name="Aoki J."/>
            <person name="Arakawa T."/>
            <person name="Iida J."/>
            <person name="Imamura K."/>
            <person name="Itoh M."/>
            <person name="Kato T."/>
            <person name="Kawaji H."/>
            <person name="Kawagashira N."/>
            <person name="Kawashima T."/>
            <person name="Kojima M."/>
            <person name="Kondo S."/>
            <person name="Konno H."/>
            <person name="Nakano K."/>
            <person name="Ninomiya N."/>
            <person name="Nishio T."/>
            <person name="Okada M."/>
            <person name="Plessy C."/>
            <person name="Shibata K."/>
            <person name="Shiraki T."/>
            <person name="Suzuki S."/>
            <person name="Tagami M."/>
            <person name="Waki K."/>
            <person name="Watahiki A."/>
            <person name="Okamura-Oho Y."/>
            <person name="Suzuki H."/>
            <person name="Kawai J."/>
            <person name="Hayashizaki Y."/>
        </authorList>
    </citation>
    <scope>NUCLEOTIDE SEQUENCE [LARGE SCALE MRNA] (ISOFORMS 1 AND 2)</scope>
    <source>
        <strain>C57BL/6J</strain>
        <strain>NOD</strain>
        <tissue>Thymus</tissue>
    </source>
</reference>
<reference key="2">
    <citation type="journal article" date="2004" name="Genome Res.">
        <title>The status, quality, and expansion of the NIH full-length cDNA project: the Mammalian Gene Collection (MGC).</title>
        <authorList>
            <consortium name="The MGC Project Team"/>
        </authorList>
    </citation>
    <scope>NUCLEOTIDE SEQUENCE [LARGE SCALE MRNA] (ISOFORM 1)</scope>
    <source>
        <strain>FVB/N</strain>
        <tissue>Mammary tumor</tissue>
    </source>
</reference>
<reference key="3">
    <citation type="journal article" date="2009" name="Cell">
        <title>Elongator controls the migration and differentiation of cortical neurons through acetylation of alpha-tubulin.</title>
        <authorList>
            <person name="Creppe C."/>
            <person name="Malinouskaya L."/>
            <person name="Volvert M.L."/>
            <person name="Gillard M."/>
            <person name="Close P."/>
            <person name="Malaise O."/>
            <person name="Laguesse S."/>
            <person name="Cornez I."/>
            <person name="Rahmouni S."/>
            <person name="Ormenese S."/>
            <person name="Belachew S."/>
            <person name="Malgrange B."/>
            <person name="Chapelle J.P."/>
            <person name="Siebenlist U."/>
            <person name="Moonen G."/>
            <person name="Chariot A."/>
            <person name="Nguyen L."/>
        </authorList>
    </citation>
    <scope>FUNCTION IN NEUROGENESIS</scope>
    <scope>SUBCELLULAR LOCATION</scope>
</reference>
<reference key="4">
    <citation type="journal article" date="2010" name="Cell">
        <title>A tissue-specific atlas of mouse protein phosphorylation and expression.</title>
        <authorList>
            <person name="Huttlin E.L."/>
            <person name="Jedrychowski M.P."/>
            <person name="Elias J.E."/>
            <person name="Goswami T."/>
            <person name="Rad R."/>
            <person name="Beausoleil S.A."/>
            <person name="Villen J."/>
            <person name="Haas W."/>
            <person name="Sowa M.E."/>
            <person name="Gygi S.P."/>
        </authorList>
    </citation>
    <scope>PHOSPHORYLATION [LARGE SCALE ANALYSIS] AT SER-161</scope>
    <scope>IDENTIFICATION BY MASS SPECTROMETRY [LARGE SCALE ANALYSIS]</scope>
    <source>
        <tissue>Brain</tissue>
        <tissue>Testis</tissue>
    </source>
</reference>
<reference key="5">
    <citation type="journal article" date="2012" name="J. Biol. Chem.">
        <title>DERP6 (ELP5) and C3ORF75 (ELP6) regulate tumorigenicity and migration of melanoma cells as subunits of Elongator.</title>
        <authorList>
            <person name="Close P."/>
            <person name="Gillard M."/>
            <person name="Ladang A."/>
            <person name="Jiang Z."/>
            <person name="Papuga J."/>
            <person name="Hawkes N."/>
            <person name="Nguyen L."/>
            <person name="Chapelle J.P."/>
            <person name="Bouillenne F."/>
            <person name="Svejstrup J."/>
            <person name="Fillet M."/>
            <person name="Chariot A."/>
        </authorList>
    </citation>
    <scope>FUNCTION</scope>
</reference>
<reference key="6">
    <citation type="journal article" date="2016" name="Biochem. Biophys. Res. Commun.">
        <title>Indispensable role for mouse ELP3 in embryonic stem cell maintenance and early development.</title>
        <authorList>
            <person name="Yoo H."/>
            <person name="Son D."/>
            <person name="Jang Y.J."/>
            <person name="Hong K."/>
        </authorList>
    </citation>
    <scope>DISRUPTION PHENOTYPE</scope>
    <scope>DEVELOPMENTAL STAGE</scope>
</reference>
<reference key="7">
    <citation type="journal article" date="2017" name="Front. Cell. Neurosci.">
        <title>Loss of Elp3 impairs the acetylation and distribution of connexin-43 in the developing cerebral cortex.</title>
        <authorList>
            <person name="Laguesse S."/>
            <person name="Close P."/>
            <person name="Van Hees L."/>
            <person name="Chariot A."/>
            <person name="Malgrange B."/>
            <person name="Nguyen L."/>
        </authorList>
    </citation>
    <scope>FUNCTION</scope>
</reference>
<reference key="8">
    <citation type="journal article" date="2018" name="Hum. Mol. Genet.">
        <title>Elongator subunit 3 (ELP3) modifies ALS through tRNA modification.</title>
        <authorList>
            <person name="Bento-Abreu A."/>
            <person name="Jager G."/>
            <person name="Swinnen B."/>
            <person name="Rue L."/>
            <person name="Hendrickx S."/>
            <person name="Jones A."/>
            <person name="Staats K.A."/>
            <person name="Taes I."/>
            <person name="Eykens C."/>
            <person name="Nonneman A."/>
            <person name="Nuyts R."/>
            <person name="Timmers M."/>
            <person name="Silva L."/>
            <person name="Chariot A."/>
            <person name="Nguyen L."/>
            <person name="Ravits J."/>
            <person name="Lemmens R."/>
            <person name="Cabooter D."/>
            <person name="Van Den Bosch L."/>
            <person name="Van Damme P."/>
            <person name="Al-Chalabi A."/>
            <person name="Bystrom A."/>
            <person name="Robberecht W."/>
        </authorList>
    </citation>
    <scope>DISRUPTION PHENOTYPE</scope>
</reference>
<comment type="function">
    <text evidence="2 4 7 8 10">Catalytic tRNA acetyltransferase subunit of the elongator complex which is required for multiple tRNA modifications, including mcm5U (5-methoxycarbonylmethyl uridine), mcm5s2U (5-methoxycarbonylmethyl-2-thiouridine), and ncm5U (5-carbamoylmethyl uridine) (By similarity). In the elongator complex, acts as a tRNA uridine(34) acetyltransferase by mediating formation of carboxymethyluridine in the wobble base at position 34 in tRNAs (By similarity). May also act as a protein lysine acetyltransferase by mediating acetylation of target proteins; such activity is however unclear in vivo and recent evidences suggest that ELP3 primarily acts as a tRNA acetyltransferase (By similarity). Involved in neurogenesis: regulates the migration and branching of projection neurons in the developing cerebral cortex, through a process depending on alpha-tubulin acetylation (PubMed:19185337). Required for acetylation of GJA1 in the developing cerebral cortex (PubMed:28507509).</text>
</comment>
<comment type="catalytic activity">
    <reaction evidence="2">
        <text>uridine(34) in tRNA + acetyl-CoA + S-adenosyl-L-methionine + H2O = 5-(carboxymethyl)uridine(34) in tRNA + 5'-deoxyadenosine + L-methionine + CoA + 2 H(+)</text>
        <dbReference type="Rhea" id="RHEA:61020"/>
        <dbReference type="Rhea" id="RHEA-COMP:10407"/>
        <dbReference type="Rhea" id="RHEA-COMP:11727"/>
        <dbReference type="ChEBI" id="CHEBI:15377"/>
        <dbReference type="ChEBI" id="CHEBI:15378"/>
        <dbReference type="ChEBI" id="CHEBI:17319"/>
        <dbReference type="ChEBI" id="CHEBI:57287"/>
        <dbReference type="ChEBI" id="CHEBI:57288"/>
        <dbReference type="ChEBI" id="CHEBI:57844"/>
        <dbReference type="ChEBI" id="CHEBI:59789"/>
        <dbReference type="ChEBI" id="CHEBI:65315"/>
        <dbReference type="ChEBI" id="CHEBI:74882"/>
        <dbReference type="EC" id="2.3.1.311"/>
    </reaction>
    <physiologicalReaction direction="left-to-right" evidence="2">
        <dbReference type="Rhea" id="RHEA:61021"/>
    </physiologicalReaction>
</comment>
<comment type="cofactor">
    <cofactor evidence="3">
        <name>[4Fe-4S] cluster</name>
        <dbReference type="ChEBI" id="CHEBI:49883"/>
    </cofactor>
    <text evidence="3">Binds 1 [4Fe-4S] cluster. The cluster is coordinated with 3 cysteines and an exchangeable S-adenosyl-L-methionine.</text>
</comment>
<comment type="pathway">
    <text evidence="4">tRNA modification; 5-methoxycarbonylmethyl-2-thiouridine-tRNA biosynthesis.</text>
</comment>
<comment type="subunit">
    <text evidence="4">Component of the elongator complex which consists of ELP1, ELP2, ELP3, ELP4, ELP5 and ELP6. ELP1, ELP2 and ELP3 form the elongator core complex. Interacts with alpha-tubulin.</text>
</comment>
<comment type="subcellular location">
    <subcellularLocation>
        <location evidence="7">Cytoplasm</location>
    </subcellularLocation>
    <subcellularLocation>
        <location evidence="4">Nucleus</location>
    </subcellularLocation>
</comment>
<comment type="alternative products">
    <event type="alternative splicing"/>
    <isoform>
        <id>Q9CZX0-1</id>
        <name>1</name>
        <sequence type="displayed"/>
    </isoform>
    <isoform>
        <id>Q9CZX0-2</id>
        <name>2</name>
        <sequence type="described" ref="VSP_024408"/>
    </isoform>
</comment>
<comment type="developmental stage">
    <text evidence="9">Ubiquitously expressed in blastocysts and 10.5 dpc embryos (PubMed:27476491). Expression increases during embryonic stem cell maintenance differentiation (PubMed:27476491).</text>
</comment>
<comment type="PTM">
    <text evidence="4">Tyrosine-phosphorylated. Also serine/threonine-phosphorylated.</text>
</comment>
<comment type="disruption phenotype">
    <text evidence="9 11">Embryonic lethality by 12.5 dpc caused by severe growth retardation (PubMed:27476491, PubMed:29415125). Conditional deletion in adults is also lethal (PubMed:29415125).</text>
</comment>
<comment type="similarity">
    <text evidence="14">Belongs to the ELP3 family.</text>
</comment>
<comment type="caution">
    <text evidence="4">The elongator complex was originally thought to play a role in transcription elongation. However, it is no longer thought to play a direct role in this process and its primary function is thought to be in tRNA modification.</text>
</comment>
<comment type="caution">
    <text evidence="4 10">The relevance of the protein lysine acetyltransferase activity is unclear (By similarity). The publication reporting acetylation of GJA1 does not provide direct evidence of lysine acetyltransferase activity of ELP3 (PubMed:28507509).</text>
</comment>
<evidence type="ECO:0000250" key="1">
    <source>
        <dbReference type="UniProtKB" id="A0A1C7D1B7"/>
    </source>
</evidence>
<evidence type="ECO:0000250" key="2">
    <source>
        <dbReference type="UniProtKB" id="D5VRB9"/>
    </source>
</evidence>
<evidence type="ECO:0000250" key="3">
    <source>
        <dbReference type="UniProtKB" id="Q02908"/>
    </source>
</evidence>
<evidence type="ECO:0000250" key="4">
    <source>
        <dbReference type="UniProtKB" id="Q9H9T3"/>
    </source>
</evidence>
<evidence type="ECO:0000255" key="5">
    <source>
        <dbReference type="PROSITE-ProRule" id="PRU00532"/>
    </source>
</evidence>
<evidence type="ECO:0000255" key="6">
    <source>
        <dbReference type="PROSITE-ProRule" id="PRU01266"/>
    </source>
</evidence>
<evidence type="ECO:0000269" key="7">
    <source>
    </source>
</evidence>
<evidence type="ECO:0000269" key="8">
    <source>
    </source>
</evidence>
<evidence type="ECO:0000269" key="9">
    <source>
    </source>
</evidence>
<evidence type="ECO:0000269" key="10">
    <source>
    </source>
</evidence>
<evidence type="ECO:0000269" key="11">
    <source>
    </source>
</evidence>
<evidence type="ECO:0000303" key="12">
    <source>
    </source>
</evidence>
<evidence type="ECO:0000303" key="13">
    <source>
    </source>
</evidence>
<evidence type="ECO:0000305" key="14"/>
<evidence type="ECO:0000312" key="15">
    <source>
        <dbReference type="MGI" id="MGI:1921445"/>
    </source>
</evidence>
<evidence type="ECO:0007744" key="16">
    <source>
    </source>
</evidence>
<keyword id="KW-0002">3D-structure</keyword>
<keyword id="KW-0004">4Fe-4S</keyword>
<keyword id="KW-0012">Acyltransferase</keyword>
<keyword id="KW-0025">Alternative splicing</keyword>
<keyword id="KW-0963">Cytoplasm</keyword>
<keyword id="KW-0408">Iron</keyword>
<keyword id="KW-0411">Iron-sulfur</keyword>
<keyword id="KW-0479">Metal-binding</keyword>
<keyword id="KW-0488">Methylation</keyword>
<keyword id="KW-0524">Neurogenesis</keyword>
<keyword id="KW-0539">Nucleus</keyword>
<keyword id="KW-0597">Phosphoprotein</keyword>
<keyword id="KW-1185">Reference proteome</keyword>
<keyword id="KW-0694">RNA-binding</keyword>
<keyword id="KW-0949">S-adenosyl-L-methionine</keyword>
<keyword id="KW-0808">Transferase</keyword>
<keyword id="KW-0819">tRNA processing</keyword>
<keyword id="KW-0820">tRNA-binding</keyword>
<sequence>MRQKRKGDLSPAELMMLTIGDVIKQLVEAHEQGKDVDLNKMKTKTAAKYGLASQPRLVDIIAAVPPHYRKILIPKLKAKPVRTASGIAVVAVMCKPHRCPHISFTGNICIYCPGGPDSDFEYSTQSYTGYEPTSMRAIRARYDPFLQTRHRIEQLKQLGHSVDKVEFIVMGGTFMALPEEYRDYFIRSLHDALSGHTSNNIHEAIKYSERSFTKCVGITIETRPDYCMKRHLSDMLTYGCTRLEIGVQSVYEDVARDTNRGHTVKAACESFHLAKDSGFKVVTHMMPDLPNVGLERDIEQFIEFFENPAFRPDGLKLYPTLVIRGTGLYELWKSGRYRSYSPSDLIELVARILALVPPWTRVYRVQRDIPMPLVSSGVEHGNLRELAFARMKDLGIQCRDVRTREVGIQEIHHRVRPYQVELVRRDYVANGGWETFLSYEDPDQDILIGLLRLRKCSEETFRFELGGGVSIVRELHVYGSVVPVSSRDPTKFQHQGFGMLLMEEAERIAREEHGSGKMAVISGVGTRNYYRKIGYRLQGPYMVKMLK</sequence>
<organism>
    <name type="scientific">Mus musculus</name>
    <name type="common">Mouse</name>
    <dbReference type="NCBI Taxonomy" id="10090"/>
    <lineage>
        <taxon>Eukaryota</taxon>
        <taxon>Metazoa</taxon>
        <taxon>Chordata</taxon>
        <taxon>Craniata</taxon>
        <taxon>Vertebrata</taxon>
        <taxon>Euteleostomi</taxon>
        <taxon>Mammalia</taxon>
        <taxon>Eutheria</taxon>
        <taxon>Euarchontoglires</taxon>
        <taxon>Glires</taxon>
        <taxon>Rodentia</taxon>
        <taxon>Myomorpha</taxon>
        <taxon>Muroidea</taxon>
        <taxon>Muridae</taxon>
        <taxon>Murinae</taxon>
        <taxon>Mus</taxon>
        <taxon>Mus</taxon>
    </lineage>
</organism>
<accession>Q9CZX0</accession>
<accession>Q8C2K2</accession>
<accession>Q8R369</accession>
<protein>
    <recommendedName>
        <fullName evidence="13">Elongator complex protein 3</fullName>
        <ecNumber evidence="2">2.3.1.311</ecNumber>
    </recommendedName>
    <alternativeName>
        <fullName evidence="14">tRNA uridine(34) acetyltransferase</fullName>
    </alternativeName>
</protein>
<dbReference type="EC" id="2.3.1.311" evidence="2"/>
<dbReference type="EMBL" id="AK012072">
    <property type="protein sequence ID" value="BAB28009.1"/>
    <property type="molecule type" value="mRNA"/>
</dbReference>
<dbReference type="EMBL" id="AK088457">
    <property type="protein sequence ID" value="BAC40364.1"/>
    <property type="molecule type" value="mRNA"/>
</dbReference>
<dbReference type="EMBL" id="BC026461">
    <property type="protein sequence ID" value="AAH26461.1"/>
    <property type="molecule type" value="mRNA"/>
</dbReference>
<dbReference type="EMBL" id="BC057453">
    <property type="protein sequence ID" value="AAH57453.1"/>
    <property type="molecule type" value="mRNA"/>
</dbReference>
<dbReference type="CCDS" id="CCDS56965.1">
    <molecule id="Q9CZX0-2"/>
</dbReference>
<dbReference type="CCDS" id="CCDS88691.1">
    <molecule id="Q9CZX0-1"/>
</dbReference>
<dbReference type="RefSeq" id="NP_001240741.1">
    <molecule id="Q9CZX0-2"/>
    <property type="nucleotide sequence ID" value="NM_001253812.1"/>
</dbReference>
<dbReference type="RefSeq" id="NP_083087.1">
    <molecule id="Q9CZX0-1"/>
    <property type="nucleotide sequence ID" value="NM_028811.3"/>
</dbReference>
<dbReference type="PDB" id="8AVG">
    <property type="method" value="EM"/>
    <property type="resolution" value="4.01 A"/>
    <property type="chains" value="C=1-547"/>
</dbReference>
<dbReference type="PDBsum" id="8AVG"/>
<dbReference type="EMDB" id="EMD-15625"/>
<dbReference type="EMDB" id="EMD-15626"/>
<dbReference type="EMDB" id="EMD-15682"/>
<dbReference type="SMR" id="Q9CZX0"/>
<dbReference type="BioGRID" id="216566">
    <property type="interactions" value="30"/>
</dbReference>
<dbReference type="FunCoup" id="Q9CZX0">
    <property type="interactions" value="3934"/>
</dbReference>
<dbReference type="IntAct" id="Q9CZX0">
    <property type="interactions" value="2"/>
</dbReference>
<dbReference type="STRING" id="10090.ENSMUSP00000022609"/>
<dbReference type="iPTMnet" id="Q9CZX0"/>
<dbReference type="PhosphoSitePlus" id="Q9CZX0"/>
<dbReference type="SwissPalm" id="Q9CZX0"/>
<dbReference type="PaxDb" id="10090-ENSMUSP00000022609"/>
<dbReference type="PeptideAtlas" id="Q9CZX0"/>
<dbReference type="ProteomicsDB" id="275746">
    <molecule id="Q9CZX0-1"/>
</dbReference>
<dbReference type="ProteomicsDB" id="275747">
    <molecule id="Q9CZX0-2"/>
</dbReference>
<dbReference type="Pumba" id="Q9CZX0"/>
<dbReference type="Antibodypedia" id="23089">
    <property type="antibodies" value="220 antibodies from 32 providers"/>
</dbReference>
<dbReference type="DNASU" id="74195"/>
<dbReference type="Ensembl" id="ENSMUST00000022609.7">
    <molecule id="Q9CZX0-2"/>
    <property type="protein sequence ID" value="ENSMUSP00000022609.6"/>
    <property type="gene ID" value="ENSMUSG00000022031.7"/>
</dbReference>
<dbReference type="Ensembl" id="ENSMUST00000225355.2">
    <molecule id="Q9CZX0-1"/>
    <property type="protein sequence ID" value="ENSMUSP00000153462.2"/>
    <property type="gene ID" value="ENSMUSG00000022031.7"/>
</dbReference>
<dbReference type="GeneID" id="74195"/>
<dbReference type="KEGG" id="mmu:74195"/>
<dbReference type="UCSC" id="uc007ujk.2">
    <molecule id="Q9CZX0-1"/>
    <property type="organism name" value="mouse"/>
</dbReference>
<dbReference type="UCSC" id="uc007ujl.2">
    <molecule id="Q9CZX0-2"/>
    <property type="organism name" value="mouse"/>
</dbReference>
<dbReference type="AGR" id="MGI:1921445"/>
<dbReference type="CTD" id="55140"/>
<dbReference type="MGI" id="MGI:1921445">
    <property type="gene designation" value="Elp3"/>
</dbReference>
<dbReference type="VEuPathDB" id="HostDB:ENSMUSG00000022031"/>
<dbReference type="eggNOG" id="KOG2535">
    <property type="taxonomic scope" value="Eukaryota"/>
</dbReference>
<dbReference type="GeneTree" id="ENSGT00390000013141"/>
<dbReference type="HOGENOM" id="CLU_025983_2_1_1"/>
<dbReference type="InParanoid" id="Q9CZX0"/>
<dbReference type="OMA" id="TFETRPD"/>
<dbReference type="OrthoDB" id="4039at9989"/>
<dbReference type="PhylomeDB" id="Q9CZX0"/>
<dbReference type="TreeFam" id="TF105752"/>
<dbReference type="UniPathway" id="UPA00988"/>
<dbReference type="BioGRID-ORCS" id="74195">
    <property type="hits" value="19 hits in 84 CRISPR screens"/>
</dbReference>
<dbReference type="ChiTaRS" id="Elp3">
    <property type="organism name" value="mouse"/>
</dbReference>
<dbReference type="PRO" id="PR:Q9CZX0"/>
<dbReference type="Proteomes" id="UP000000589">
    <property type="component" value="Chromosome 14"/>
</dbReference>
<dbReference type="RNAct" id="Q9CZX0">
    <property type="molecule type" value="protein"/>
</dbReference>
<dbReference type="Bgee" id="ENSMUSG00000022031">
    <property type="expression patterns" value="Expressed in cortical plate and 268 other cell types or tissues"/>
</dbReference>
<dbReference type="ExpressionAtlas" id="Q9CZX0">
    <property type="expression patterns" value="baseline and differential"/>
</dbReference>
<dbReference type="GO" id="GO:0005737">
    <property type="term" value="C:cytoplasm"/>
    <property type="evidence" value="ECO:0000250"/>
    <property type="project" value="UniProtKB"/>
</dbReference>
<dbReference type="GO" id="GO:0005829">
    <property type="term" value="C:cytosol"/>
    <property type="evidence" value="ECO:0007669"/>
    <property type="project" value="Ensembl"/>
</dbReference>
<dbReference type="GO" id="GO:0033588">
    <property type="term" value="C:elongator holoenzyme complex"/>
    <property type="evidence" value="ECO:0000250"/>
    <property type="project" value="UniProtKB"/>
</dbReference>
<dbReference type="GO" id="GO:0005730">
    <property type="term" value="C:nucleolus"/>
    <property type="evidence" value="ECO:0007669"/>
    <property type="project" value="Ensembl"/>
</dbReference>
<dbReference type="GO" id="GO:0051539">
    <property type="term" value="F:4 iron, 4 sulfur cluster binding"/>
    <property type="evidence" value="ECO:0007669"/>
    <property type="project" value="UniProtKB-KW"/>
</dbReference>
<dbReference type="GO" id="GO:0046872">
    <property type="term" value="F:metal ion binding"/>
    <property type="evidence" value="ECO:0007669"/>
    <property type="project" value="UniProtKB-KW"/>
</dbReference>
<dbReference type="GO" id="GO:0008607">
    <property type="term" value="F:phosphorylase kinase regulator activity"/>
    <property type="evidence" value="ECO:0000250"/>
    <property type="project" value="UniProtKB"/>
</dbReference>
<dbReference type="GO" id="GO:0000049">
    <property type="term" value="F:tRNA binding"/>
    <property type="evidence" value="ECO:0007669"/>
    <property type="project" value="UniProtKB-KW"/>
</dbReference>
<dbReference type="GO" id="GO:0106261">
    <property type="term" value="F:tRNA uridine(34) acetyltransferase activity"/>
    <property type="evidence" value="ECO:0000250"/>
    <property type="project" value="UniProtKB"/>
</dbReference>
<dbReference type="GO" id="GO:0007417">
    <property type="term" value="P:central nervous system development"/>
    <property type="evidence" value="ECO:0000315"/>
    <property type="project" value="UniProtKB"/>
</dbReference>
<dbReference type="GO" id="GO:0001764">
    <property type="term" value="P:neuron migration"/>
    <property type="evidence" value="ECO:0000315"/>
    <property type="project" value="UniProtKB"/>
</dbReference>
<dbReference type="GO" id="GO:0030335">
    <property type="term" value="P:positive regulation of cell migration"/>
    <property type="evidence" value="ECO:0000315"/>
    <property type="project" value="UniProtKB"/>
</dbReference>
<dbReference type="GO" id="GO:0006357">
    <property type="term" value="P:regulation of transcription by RNA polymerase II"/>
    <property type="evidence" value="ECO:0000250"/>
    <property type="project" value="UniProtKB"/>
</dbReference>
<dbReference type="GO" id="GO:0002098">
    <property type="term" value="P:tRNA wobble uridine modification"/>
    <property type="evidence" value="ECO:0000250"/>
    <property type="project" value="UniProtKB"/>
</dbReference>
<dbReference type="CDD" id="cd01335">
    <property type="entry name" value="Radical_SAM"/>
    <property type="match status" value="1"/>
</dbReference>
<dbReference type="FunFam" id="3.40.630.30:FF:000003">
    <property type="entry name" value="Elongator complex protein 3"/>
    <property type="match status" value="1"/>
</dbReference>
<dbReference type="Gene3D" id="3.40.630.30">
    <property type="match status" value="1"/>
</dbReference>
<dbReference type="InterPro" id="IPR016181">
    <property type="entry name" value="Acyl_CoA_acyltransferase"/>
</dbReference>
<dbReference type="InterPro" id="IPR039661">
    <property type="entry name" value="ELP3"/>
</dbReference>
<dbReference type="InterPro" id="IPR034687">
    <property type="entry name" value="ELP3-like"/>
</dbReference>
<dbReference type="InterPro" id="IPR056591">
    <property type="entry name" value="ELP3-like_N"/>
</dbReference>
<dbReference type="InterPro" id="IPR006638">
    <property type="entry name" value="Elp3/MiaA/NifB-like_rSAM"/>
</dbReference>
<dbReference type="InterPro" id="IPR000182">
    <property type="entry name" value="GNAT_dom"/>
</dbReference>
<dbReference type="InterPro" id="IPR032432">
    <property type="entry name" value="Radical_SAM_C"/>
</dbReference>
<dbReference type="InterPro" id="IPR007197">
    <property type="entry name" value="rSAM"/>
</dbReference>
<dbReference type="NCBIfam" id="TIGR01211">
    <property type="entry name" value="ELP3"/>
    <property type="match status" value="1"/>
</dbReference>
<dbReference type="PANTHER" id="PTHR11135:SF0">
    <property type="entry name" value="ELONGATOR COMPLEX PROTEIN 3"/>
    <property type="match status" value="1"/>
</dbReference>
<dbReference type="PANTHER" id="PTHR11135">
    <property type="entry name" value="HISTONE ACETYLTRANSFERASE-RELATED"/>
    <property type="match status" value="1"/>
</dbReference>
<dbReference type="Pfam" id="PF23613">
    <property type="entry name" value="ELP3_N"/>
    <property type="match status" value="1"/>
</dbReference>
<dbReference type="Pfam" id="PF04055">
    <property type="entry name" value="Radical_SAM"/>
    <property type="match status" value="1"/>
</dbReference>
<dbReference type="Pfam" id="PF16199">
    <property type="entry name" value="Radical_SAM_C"/>
    <property type="match status" value="1"/>
</dbReference>
<dbReference type="PIRSF" id="PIRSF005669">
    <property type="entry name" value="Hist_AcTrfase_ELP3"/>
    <property type="match status" value="1"/>
</dbReference>
<dbReference type="SFLD" id="SFLDG01086">
    <property type="entry name" value="elongater_protein-like"/>
    <property type="match status" value="1"/>
</dbReference>
<dbReference type="SFLD" id="SFLDF00344">
    <property type="entry name" value="ELP3-like"/>
    <property type="match status" value="1"/>
</dbReference>
<dbReference type="SMART" id="SM00729">
    <property type="entry name" value="Elp3"/>
    <property type="match status" value="1"/>
</dbReference>
<dbReference type="SUPFAM" id="SSF55729">
    <property type="entry name" value="Acyl-CoA N-acyltransferases (Nat)"/>
    <property type="match status" value="1"/>
</dbReference>
<dbReference type="SUPFAM" id="SSF102114">
    <property type="entry name" value="Radical SAM enzymes"/>
    <property type="match status" value="1"/>
</dbReference>
<dbReference type="PROSITE" id="PS51186">
    <property type="entry name" value="GNAT"/>
    <property type="match status" value="1"/>
</dbReference>
<dbReference type="PROSITE" id="PS51918">
    <property type="entry name" value="RADICAL_SAM"/>
    <property type="match status" value="1"/>
</dbReference>
<proteinExistence type="evidence at protein level"/>
<feature type="chain" id="PRO_0000283987" description="Elongator complex protein 3">
    <location>
        <begin position="1"/>
        <end position="547"/>
    </location>
</feature>
<feature type="domain" description="Radical SAM core" evidence="6">
    <location>
        <begin position="82"/>
        <end position="372"/>
    </location>
</feature>
<feature type="domain" description="N-acetyltransferase" evidence="5">
    <location>
        <begin position="396"/>
        <end position="547"/>
    </location>
</feature>
<feature type="binding site" evidence="3">
    <location>
        <position position="99"/>
    </location>
    <ligand>
        <name>[4Fe-4S] cluster</name>
        <dbReference type="ChEBI" id="CHEBI:49883"/>
        <note>4Fe-4S-S-AdoMet</note>
    </ligand>
</feature>
<feature type="binding site" evidence="3">
    <location>
        <position position="109"/>
    </location>
    <ligand>
        <name>[4Fe-4S] cluster</name>
        <dbReference type="ChEBI" id="CHEBI:49883"/>
        <note>4Fe-4S-S-AdoMet</note>
    </ligand>
</feature>
<feature type="binding site" evidence="3">
    <location>
        <position position="112"/>
    </location>
    <ligand>
        <name>[4Fe-4S] cluster</name>
        <dbReference type="ChEBI" id="CHEBI:49883"/>
        <note>4Fe-4S-S-AdoMet</note>
    </ligand>
</feature>
<feature type="binding site" evidence="1">
    <location>
        <position position="164"/>
    </location>
    <ligand>
        <name>acetyl-CoA</name>
        <dbReference type="ChEBI" id="CHEBI:57288"/>
    </ligand>
</feature>
<feature type="binding site" evidence="1">
    <location>
        <begin position="474"/>
        <end position="477"/>
    </location>
    <ligand>
        <name>acetyl-CoA</name>
        <dbReference type="ChEBI" id="CHEBI:57288"/>
    </ligand>
</feature>
<feature type="binding site" evidence="1">
    <location>
        <begin position="497"/>
        <end position="499"/>
    </location>
    <ligand>
        <name>acetyl-CoA</name>
        <dbReference type="ChEBI" id="CHEBI:57288"/>
    </ligand>
</feature>
<feature type="binding site" evidence="1">
    <location>
        <position position="530"/>
    </location>
    <ligand>
        <name>acetyl-CoA</name>
        <dbReference type="ChEBI" id="CHEBI:57288"/>
    </ligand>
</feature>
<feature type="modified residue" description="Phosphoserine" evidence="16">
    <location>
        <position position="161"/>
    </location>
</feature>
<feature type="modified residue" description="N6-methyllysine" evidence="4">
    <location>
        <position position="229"/>
    </location>
</feature>
<feature type="modified residue" description="Phosphotyrosine" evidence="4">
    <location>
        <position position="251"/>
    </location>
</feature>
<feature type="splice variant" id="VSP_024408" description="In isoform 2." evidence="12">
    <original>G</original>
    <variation>GAKYVGQGRKGGSGFSEITG</variation>
    <location>
        <position position="7"/>
    </location>
</feature>
<gene>
    <name evidence="13 15" type="primary">Elp3</name>
</gene>
<name>ELP3_MOUSE</name>